<keyword id="KW-0002">3D-structure</keyword>
<keyword id="KW-0025">Alternative splicing</keyword>
<keyword id="KW-1003">Cell membrane</keyword>
<keyword id="KW-0968">Cytoplasmic vesicle</keyword>
<keyword id="KW-0254">Endocytosis</keyword>
<keyword id="KW-0887">Epilepsy</keyword>
<keyword id="KW-0472">Membrane</keyword>
<keyword id="KW-0488">Methylation</keyword>
<keyword id="KW-0597">Phosphoprotein</keyword>
<keyword id="KW-0653">Protein transport</keyword>
<keyword id="KW-1267">Proteomics identification</keyword>
<keyword id="KW-1185">Reference proteome</keyword>
<keyword id="KW-0677">Repeat</keyword>
<keyword id="KW-0813">Transport</keyword>
<organism>
    <name type="scientific">Homo sapiens</name>
    <name type="common">Human</name>
    <dbReference type="NCBI Taxonomy" id="9606"/>
    <lineage>
        <taxon>Eukaryota</taxon>
        <taxon>Metazoa</taxon>
        <taxon>Chordata</taxon>
        <taxon>Craniata</taxon>
        <taxon>Vertebrata</taxon>
        <taxon>Euteleostomi</taxon>
        <taxon>Mammalia</taxon>
        <taxon>Eutheria</taxon>
        <taxon>Euarchontoglires</taxon>
        <taxon>Primates</taxon>
        <taxon>Haplorrhini</taxon>
        <taxon>Catarrhini</taxon>
        <taxon>Hominidae</taxon>
        <taxon>Homo</taxon>
    </lineage>
</organism>
<proteinExistence type="evidence at protein level"/>
<protein>
    <recommendedName>
        <fullName>Adaptin ear-binding coat-associated protein 1</fullName>
    </recommendedName>
    <alternativeName>
        <fullName>NECAP endocytosis-associated protein 1</fullName>
        <shortName>NECAP-1</shortName>
    </alternativeName>
</protein>
<name>NECP1_HUMAN</name>
<comment type="function">
    <text evidence="1">Involved in endocytosis.</text>
</comment>
<comment type="subunit">
    <text evidence="1">Interacts with AP1G1 and AP2A1 components of the adapter protein complexes AP-1 and AP-2. Interacts with the GAE domain proteins GGA1, GGA2 and GGA3 (By similarity).</text>
</comment>
<comment type="interaction">
    <interactant intactId="EBI-2609792">
        <id>Q8NC96</id>
    </interactant>
    <interactant intactId="EBI-11978055">
        <id>Q10567-3</id>
        <label>AP1B1</label>
    </interactant>
    <organismsDiffer>false</organismsDiffer>
    <experiments>3</experiments>
</comment>
<comment type="subcellular location">
    <subcellularLocation>
        <location evidence="1">Cytoplasmic vesicle</location>
        <location evidence="1">Clathrin-coated vesicle membrane</location>
    </subcellularLocation>
    <subcellularLocation>
        <location evidence="1">Cell membrane</location>
    </subcellularLocation>
    <text evidence="1">Colocalizes with AP-2 at the plasma membrane.</text>
</comment>
<comment type="alternative products">
    <event type="alternative splicing"/>
    <isoform>
        <id>Q8NC96-1</id>
        <name>1</name>
        <sequence type="displayed"/>
    </isoform>
    <isoform>
        <id>Q8NC96-2</id>
        <name>2</name>
        <sequence type="described" ref="VSP_013232 VSP_013233"/>
    </isoform>
</comment>
<comment type="domain">
    <text evidence="1">The WXXF motifs mediate binding of accessory proteins to the ear-domain of AP-1, GGAs and AP-2 through hydrophobic interactions. Selective binding to the GAE domains of AP-1 or to the alpha-ear domain of AP-2 is tuned by the acidic context surrounding the motif and the properties of the second residue of the motif itself. The WXXF motif 1, which is preceded by an acidic residue and has a glycine in second position mediates specific interaction with AP-1. The WXXF motif 2, which is followed by the C-terminal carboxyl group negative charge, allows specific interaction with AP-2 (By similarity).</text>
</comment>
<comment type="disease" evidence="3">
    <disease id="DI-04123">
        <name>Developmental and epileptic encephalopathy 21</name>
        <acronym>DEE21</acronym>
        <description>A severe disease characterized by intractable seizures, profound global developmental delay, and persistent severe axial hypotonia as well as appendicular hypertonia.</description>
        <dbReference type="MIM" id="615833"/>
    </disease>
    <text>The disease is caused by variants affecting the gene represented in this entry.</text>
</comment>
<comment type="miscellaneous">
    <molecule>Isoform 2</molecule>
    <text evidence="5">May be produced at very low levels due to a premature stop codon in the mRNA, leading to nonsense-mediated mRNA decay.</text>
</comment>
<comment type="similarity">
    <text evidence="5">Belongs to the NECAP family.</text>
</comment>
<comment type="sequence caution" evidence="5">
    <conflict type="erroneous initiation">
        <sequence resource="EMBL-CDS" id="AAH02888"/>
    </conflict>
    <text>Truncated N-terminus.</text>
</comment>
<dbReference type="EMBL" id="AK074858">
    <property type="protein sequence ID" value="BAC11250.1"/>
    <property type="molecule type" value="mRNA"/>
</dbReference>
<dbReference type="EMBL" id="AK074880">
    <property type="protein sequence ID" value="BAC11264.1"/>
    <property type="molecule type" value="mRNA"/>
</dbReference>
<dbReference type="EMBL" id="AK074923">
    <property type="protein sequence ID" value="BAC11296.1"/>
    <property type="molecule type" value="mRNA"/>
</dbReference>
<dbReference type="EMBL" id="AK075013">
    <property type="protein sequence ID" value="BAC11352.1"/>
    <property type="molecule type" value="mRNA"/>
</dbReference>
<dbReference type="EMBL" id="AL050272">
    <property type="protein sequence ID" value="CAB43373.2"/>
    <property type="molecule type" value="mRNA"/>
</dbReference>
<dbReference type="EMBL" id="BC002888">
    <property type="protein sequence ID" value="AAH02888.1"/>
    <property type="status" value="ALT_INIT"/>
    <property type="molecule type" value="mRNA"/>
</dbReference>
<dbReference type="EMBL" id="BC067367">
    <property type="protein sequence ID" value="AAH67367.1"/>
    <property type="molecule type" value="mRNA"/>
</dbReference>
<dbReference type="EMBL" id="BC084551">
    <property type="protein sequence ID" value="AAH84551.1"/>
    <property type="molecule type" value="mRNA"/>
</dbReference>
<dbReference type="EMBL" id="BC110876">
    <property type="protein sequence ID" value="AAI10877.1"/>
    <property type="molecule type" value="mRNA"/>
</dbReference>
<dbReference type="CCDS" id="CCDS8589.1">
    <molecule id="Q8NC96-1"/>
</dbReference>
<dbReference type="PIR" id="T08719">
    <property type="entry name" value="T08719"/>
</dbReference>
<dbReference type="RefSeq" id="NP_056324.2">
    <molecule id="Q8NC96-1"/>
    <property type="nucleotide sequence ID" value="NM_015509.3"/>
</dbReference>
<dbReference type="PDB" id="6RH5">
    <property type="method" value="NMR"/>
    <property type="chains" value="A=1-133"/>
</dbReference>
<dbReference type="PDB" id="6RH6">
    <property type="method" value="NMR"/>
    <property type="chains" value="A=1-133"/>
</dbReference>
<dbReference type="PDBsum" id="6RH5"/>
<dbReference type="PDBsum" id="6RH6"/>
<dbReference type="SMR" id="Q8NC96"/>
<dbReference type="BioGRID" id="117461">
    <property type="interactions" value="73"/>
</dbReference>
<dbReference type="FunCoup" id="Q8NC96">
    <property type="interactions" value="1344"/>
</dbReference>
<dbReference type="IntAct" id="Q8NC96">
    <property type="interactions" value="53"/>
</dbReference>
<dbReference type="MINT" id="Q8NC96"/>
<dbReference type="STRING" id="9606.ENSP00000491067"/>
<dbReference type="GlyGen" id="Q8NC96">
    <property type="glycosylation" value="3 sites, 1 N-linked glycan (1 site), 1 O-linked glycan (1 site)"/>
</dbReference>
<dbReference type="iPTMnet" id="Q8NC96"/>
<dbReference type="PhosphoSitePlus" id="Q8NC96"/>
<dbReference type="BioMuta" id="NECAP1"/>
<dbReference type="DMDM" id="62287155"/>
<dbReference type="jPOST" id="Q8NC96"/>
<dbReference type="MassIVE" id="Q8NC96"/>
<dbReference type="PaxDb" id="9606-ENSP00000341737"/>
<dbReference type="PeptideAtlas" id="Q8NC96"/>
<dbReference type="ProteomicsDB" id="72863">
    <molecule id="Q8NC96-1"/>
</dbReference>
<dbReference type="ProteomicsDB" id="72864">
    <molecule id="Q8NC96-2"/>
</dbReference>
<dbReference type="Pumba" id="Q8NC96"/>
<dbReference type="Antibodypedia" id="23021">
    <property type="antibodies" value="63 antibodies from 19 providers"/>
</dbReference>
<dbReference type="DNASU" id="25977"/>
<dbReference type="Ensembl" id="ENST00000339754.11">
    <molecule id="Q8NC96-1"/>
    <property type="protein sequence ID" value="ENSP00000341737.5"/>
    <property type="gene ID" value="ENSG00000089818.18"/>
</dbReference>
<dbReference type="Ensembl" id="ENST00000450991.6">
    <molecule id="Q8NC96-2"/>
    <property type="protein sequence ID" value="ENSP00000401963.2"/>
    <property type="gene ID" value="ENSG00000089818.18"/>
</dbReference>
<dbReference type="Ensembl" id="ENST00000639955.1">
    <molecule id="Q8NC96-1"/>
    <property type="protein sequence ID" value="ENSP00000491067.1"/>
    <property type="gene ID" value="ENSG00000089818.18"/>
</dbReference>
<dbReference type="GeneID" id="25977"/>
<dbReference type="KEGG" id="hsa:25977"/>
<dbReference type="MANE-Select" id="ENST00000339754.11">
    <property type="protein sequence ID" value="ENSP00000341737.5"/>
    <property type="RefSeq nucleotide sequence ID" value="NM_015509.4"/>
    <property type="RefSeq protein sequence ID" value="NP_056324.2"/>
</dbReference>
<dbReference type="UCSC" id="uc001qtx.3">
    <molecule id="Q8NC96-1"/>
    <property type="organism name" value="human"/>
</dbReference>
<dbReference type="AGR" id="HGNC:24539"/>
<dbReference type="CTD" id="25977"/>
<dbReference type="DisGeNET" id="25977"/>
<dbReference type="GeneCards" id="NECAP1"/>
<dbReference type="HGNC" id="HGNC:24539">
    <property type="gene designation" value="NECAP1"/>
</dbReference>
<dbReference type="HPA" id="ENSG00000089818">
    <property type="expression patterns" value="Tissue enhanced (brain)"/>
</dbReference>
<dbReference type="MalaCards" id="NECAP1"/>
<dbReference type="MIM" id="611623">
    <property type="type" value="gene"/>
</dbReference>
<dbReference type="MIM" id="615833">
    <property type="type" value="phenotype"/>
</dbReference>
<dbReference type="neXtProt" id="NX_Q8NC96"/>
<dbReference type="OpenTargets" id="ENSG00000089818"/>
<dbReference type="Orphanet" id="442835">
    <property type="disease" value="Non-specific early-onset epileptic encephalopathy"/>
</dbReference>
<dbReference type="PharmGKB" id="PA142671267"/>
<dbReference type="VEuPathDB" id="HostDB:ENSG00000089818"/>
<dbReference type="eggNOG" id="KOG2500">
    <property type="taxonomic scope" value="Eukaryota"/>
</dbReference>
<dbReference type="GeneTree" id="ENSGT00390000009359"/>
<dbReference type="HOGENOM" id="CLU_069884_1_1_1"/>
<dbReference type="InParanoid" id="Q8NC96"/>
<dbReference type="OrthoDB" id="10265489at2759"/>
<dbReference type="PAN-GO" id="Q8NC96">
    <property type="GO annotations" value="2 GO annotations based on evolutionary models"/>
</dbReference>
<dbReference type="PhylomeDB" id="Q8NC96"/>
<dbReference type="TreeFam" id="TF314482"/>
<dbReference type="PathwayCommons" id="Q8NC96"/>
<dbReference type="Reactome" id="R-HSA-432722">
    <property type="pathway name" value="Golgi Associated Vesicle Biogenesis"/>
</dbReference>
<dbReference type="Reactome" id="R-HSA-8856825">
    <property type="pathway name" value="Cargo recognition for clathrin-mediated endocytosis"/>
</dbReference>
<dbReference type="Reactome" id="R-HSA-8856828">
    <property type="pathway name" value="Clathrin-mediated endocytosis"/>
</dbReference>
<dbReference type="SignaLink" id="Q8NC96"/>
<dbReference type="SIGNOR" id="Q8NC96"/>
<dbReference type="BioGRID-ORCS" id="25977">
    <property type="hits" value="8 hits in 1151 CRISPR screens"/>
</dbReference>
<dbReference type="ChiTaRS" id="NECAP1">
    <property type="organism name" value="human"/>
</dbReference>
<dbReference type="GenomeRNAi" id="25977"/>
<dbReference type="Pharos" id="Q8NC96">
    <property type="development level" value="Tbio"/>
</dbReference>
<dbReference type="PRO" id="PR:Q8NC96"/>
<dbReference type="Proteomes" id="UP000005640">
    <property type="component" value="Chromosome 12"/>
</dbReference>
<dbReference type="RNAct" id="Q8NC96">
    <property type="molecule type" value="protein"/>
</dbReference>
<dbReference type="Bgee" id="ENSG00000089818">
    <property type="expression patterns" value="Expressed in cortical plate and 195 other cell types or tissues"/>
</dbReference>
<dbReference type="ExpressionAtlas" id="Q8NC96">
    <property type="expression patterns" value="baseline and differential"/>
</dbReference>
<dbReference type="GO" id="GO:0030125">
    <property type="term" value="C:clathrin vesicle coat"/>
    <property type="evidence" value="ECO:0000318"/>
    <property type="project" value="GO_Central"/>
</dbReference>
<dbReference type="GO" id="GO:0005905">
    <property type="term" value="C:clathrin-coated pit"/>
    <property type="evidence" value="ECO:0007669"/>
    <property type="project" value="Ensembl"/>
</dbReference>
<dbReference type="GO" id="GO:0005829">
    <property type="term" value="C:cytosol"/>
    <property type="evidence" value="ECO:0000304"/>
    <property type="project" value="Reactome"/>
</dbReference>
<dbReference type="GO" id="GO:0005886">
    <property type="term" value="C:plasma membrane"/>
    <property type="evidence" value="ECO:0007669"/>
    <property type="project" value="UniProtKB-SubCell"/>
</dbReference>
<dbReference type="GO" id="GO:0098793">
    <property type="term" value="C:presynapse"/>
    <property type="evidence" value="ECO:0007669"/>
    <property type="project" value="Ensembl"/>
</dbReference>
<dbReference type="GO" id="GO:0140238">
    <property type="term" value="P:presynaptic endocytosis"/>
    <property type="evidence" value="ECO:0007669"/>
    <property type="project" value="Ensembl"/>
</dbReference>
<dbReference type="GO" id="GO:0015031">
    <property type="term" value="P:protein transport"/>
    <property type="evidence" value="ECO:0007669"/>
    <property type="project" value="UniProtKB-KW"/>
</dbReference>
<dbReference type="GO" id="GO:0016192">
    <property type="term" value="P:vesicle-mediated transport"/>
    <property type="evidence" value="ECO:0000318"/>
    <property type="project" value="GO_Central"/>
</dbReference>
<dbReference type="CDD" id="cd13228">
    <property type="entry name" value="PHear_NECAP"/>
    <property type="match status" value="1"/>
</dbReference>
<dbReference type="FunFam" id="2.30.29.30:FF:000064">
    <property type="entry name" value="Adaptin ear-binding coat-associated protein 1"/>
    <property type="match status" value="1"/>
</dbReference>
<dbReference type="Gene3D" id="2.30.29.30">
    <property type="entry name" value="Pleckstrin-homology domain (PH domain)/Phosphotyrosine-binding domain (PTB)"/>
    <property type="match status" value="1"/>
</dbReference>
<dbReference type="InterPro" id="IPR012466">
    <property type="entry name" value="NECAP_PHear"/>
</dbReference>
<dbReference type="InterPro" id="IPR011993">
    <property type="entry name" value="PH-like_dom_sf"/>
</dbReference>
<dbReference type="PANTHER" id="PTHR12847:SF15">
    <property type="entry name" value="ADAPTIN EAR-BINDING COAT-ASSOCIATED PROTEIN 1"/>
    <property type="match status" value="1"/>
</dbReference>
<dbReference type="PANTHER" id="PTHR12847">
    <property type="entry name" value="ATP-BINDING CASSETTE ABC TRANSPORTER-RELATED"/>
    <property type="match status" value="1"/>
</dbReference>
<dbReference type="Pfam" id="PF07933">
    <property type="entry name" value="DUF1681"/>
    <property type="match status" value="1"/>
</dbReference>
<dbReference type="SUPFAM" id="SSF50729">
    <property type="entry name" value="PH domain-like"/>
    <property type="match status" value="1"/>
</dbReference>
<feature type="chain" id="PRO_0000213067" description="Adaptin ear-binding coat-associated protein 1">
    <location>
        <begin position="1"/>
        <end position="275"/>
    </location>
</feature>
<feature type="region of interest" description="Disordered" evidence="2">
    <location>
        <begin position="170"/>
        <end position="191"/>
    </location>
</feature>
<feature type="region of interest" description="Disordered" evidence="2">
    <location>
        <begin position="254"/>
        <end position="275"/>
    </location>
</feature>
<feature type="short sequence motif" description="WXXF motif 1">
    <location>
        <begin position="252"/>
        <end position="255"/>
    </location>
</feature>
<feature type="short sequence motif" description="WXXF motif 2">
    <location>
        <begin position="272"/>
        <end position="275"/>
    </location>
</feature>
<feature type="compositionally biased region" description="Polar residues" evidence="2">
    <location>
        <begin position="256"/>
        <end position="275"/>
    </location>
</feature>
<feature type="modified residue" description="Omega-N-methylarginine" evidence="7">
    <location>
        <position position="180"/>
    </location>
</feature>
<feature type="modified residue" description="Phosphothreonine" evidence="6">
    <location>
        <position position="211"/>
    </location>
</feature>
<feature type="splice variant" id="VSP_013232" description="In isoform 2." evidence="4">
    <original>R</original>
    <variation>G</variation>
    <location>
        <position position="102"/>
    </location>
</feature>
<feature type="splice variant" id="VSP_013233" description="In isoform 2." evidence="4">
    <location>
        <begin position="103"/>
        <end position="275"/>
    </location>
</feature>
<feature type="sequence variant" id="VAR_034153" description="In dbSNP:rs2231752.">
    <original>D</original>
    <variation>N</variation>
    <location>
        <position position="224"/>
    </location>
</feature>
<feature type="sequence conflict" description="In Ref. 2; CAB43373." evidence="5" ref="2">
    <original>Y</original>
    <variation>F</variation>
    <location>
        <position position="77"/>
    </location>
</feature>
<feature type="sequence conflict" description="In Ref. 1; BAC11250." evidence="5" ref="1">
    <original>D</original>
    <variation>G</variation>
    <location>
        <position position="232"/>
    </location>
</feature>
<feature type="sequence conflict" description="In Ref. 1; BAC11264." evidence="5" ref="1">
    <original>T</original>
    <variation>A</variation>
    <location>
        <position position="239"/>
    </location>
</feature>
<feature type="strand" evidence="9">
    <location>
        <begin position="2"/>
        <end position="4"/>
    </location>
</feature>
<feature type="strand" evidence="8">
    <location>
        <begin position="9"/>
        <end position="21"/>
    </location>
</feature>
<feature type="turn" evidence="8">
    <location>
        <begin position="27"/>
        <end position="29"/>
    </location>
</feature>
<feature type="helix" evidence="9">
    <location>
        <begin position="33"/>
        <end position="35"/>
    </location>
</feature>
<feature type="turn" evidence="9">
    <location>
        <begin position="36"/>
        <end position="39"/>
    </location>
</feature>
<feature type="strand" evidence="8">
    <location>
        <begin position="42"/>
        <end position="52"/>
    </location>
</feature>
<feature type="strand" evidence="8">
    <location>
        <begin position="55"/>
        <end position="61"/>
    </location>
</feature>
<feature type="turn" evidence="8">
    <location>
        <begin position="63"/>
        <end position="65"/>
    </location>
</feature>
<feature type="strand" evidence="8">
    <location>
        <begin position="68"/>
        <end position="79"/>
    </location>
</feature>
<feature type="strand" evidence="8">
    <location>
        <begin position="82"/>
        <end position="84"/>
    </location>
</feature>
<feature type="strand" evidence="9">
    <location>
        <begin position="85"/>
        <end position="87"/>
    </location>
</feature>
<feature type="strand" evidence="8">
    <location>
        <begin position="91"/>
        <end position="97"/>
    </location>
</feature>
<feature type="strand" evidence="8">
    <location>
        <begin position="99"/>
        <end position="101"/>
    </location>
</feature>
<feature type="strand" evidence="8">
    <location>
        <begin position="103"/>
        <end position="109"/>
    </location>
</feature>
<feature type="helix" evidence="8">
    <location>
        <begin position="113"/>
        <end position="127"/>
    </location>
</feature>
<feature type="turn" evidence="8">
    <location>
        <begin position="128"/>
        <end position="132"/>
    </location>
</feature>
<accession>Q8NC96</accession>
<accession>Q2NL73</accession>
<accession>Q5XG95</accession>
<accession>Q6NWY6</accession>
<accession>Q8N153</accession>
<accession>Q8NCB0</accession>
<accession>Q9BU52</accession>
<accession>Q9Y407</accession>
<sequence length="275" mass="29737">MATELEYESVLCVKPDVSVYRIPPRASNRGYRASDWKLDQPDWTGRLRITSKGKTAYIKLEDKVSGELFAQAPVEQYPGIAVETVTDSSRYFVIRIQDGTGRSAFIGIGFTDRGDAFDFNVSLQDHFKWVKQESEISKESQEMDARPKLDLGFKEGQTIKLCIGNITNKKGGASKPRTARGGGLSLLPPPPGGKVTIPPPSSSVAISNHVTPPPIPKSNHGGSDADILLDLDSPAPVTTPAPTPVSVSNDLWGDFSTASSSVPNQAPQPSNWVQF</sequence>
<gene>
    <name type="primary">NECAP1</name>
</gene>
<evidence type="ECO:0000250" key="1"/>
<evidence type="ECO:0000256" key="2">
    <source>
        <dbReference type="SAM" id="MobiDB-lite"/>
    </source>
</evidence>
<evidence type="ECO:0000269" key="3">
    <source>
    </source>
</evidence>
<evidence type="ECO:0000303" key="4">
    <source>
    </source>
</evidence>
<evidence type="ECO:0000305" key="5"/>
<evidence type="ECO:0007744" key="6">
    <source>
    </source>
</evidence>
<evidence type="ECO:0007744" key="7">
    <source>
    </source>
</evidence>
<evidence type="ECO:0007829" key="8">
    <source>
        <dbReference type="PDB" id="6RH5"/>
    </source>
</evidence>
<evidence type="ECO:0007829" key="9">
    <source>
        <dbReference type="PDB" id="6RH6"/>
    </source>
</evidence>
<reference key="1">
    <citation type="journal article" date="2004" name="Nat. Genet.">
        <title>Complete sequencing and characterization of 21,243 full-length human cDNAs.</title>
        <authorList>
            <person name="Ota T."/>
            <person name="Suzuki Y."/>
            <person name="Nishikawa T."/>
            <person name="Otsuki T."/>
            <person name="Sugiyama T."/>
            <person name="Irie R."/>
            <person name="Wakamatsu A."/>
            <person name="Hayashi K."/>
            <person name="Sato H."/>
            <person name="Nagai K."/>
            <person name="Kimura K."/>
            <person name="Makita H."/>
            <person name="Sekine M."/>
            <person name="Obayashi M."/>
            <person name="Nishi T."/>
            <person name="Shibahara T."/>
            <person name="Tanaka T."/>
            <person name="Ishii S."/>
            <person name="Yamamoto J."/>
            <person name="Saito K."/>
            <person name="Kawai Y."/>
            <person name="Isono Y."/>
            <person name="Nakamura Y."/>
            <person name="Nagahari K."/>
            <person name="Murakami K."/>
            <person name="Yasuda T."/>
            <person name="Iwayanagi T."/>
            <person name="Wagatsuma M."/>
            <person name="Shiratori A."/>
            <person name="Sudo H."/>
            <person name="Hosoiri T."/>
            <person name="Kaku Y."/>
            <person name="Kodaira H."/>
            <person name="Kondo H."/>
            <person name="Sugawara M."/>
            <person name="Takahashi M."/>
            <person name="Kanda K."/>
            <person name="Yokoi T."/>
            <person name="Furuya T."/>
            <person name="Kikkawa E."/>
            <person name="Omura Y."/>
            <person name="Abe K."/>
            <person name="Kamihara K."/>
            <person name="Katsuta N."/>
            <person name="Sato K."/>
            <person name="Tanikawa M."/>
            <person name="Yamazaki M."/>
            <person name="Ninomiya K."/>
            <person name="Ishibashi T."/>
            <person name="Yamashita H."/>
            <person name="Murakawa K."/>
            <person name="Fujimori K."/>
            <person name="Tanai H."/>
            <person name="Kimata M."/>
            <person name="Watanabe M."/>
            <person name="Hiraoka S."/>
            <person name="Chiba Y."/>
            <person name="Ishida S."/>
            <person name="Ono Y."/>
            <person name="Takiguchi S."/>
            <person name="Watanabe S."/>
            <person name="Yosida M."/>
            <person name="Hotuta T."/>
            <person name="Kusano J."/>
            <person name="Kanehori K."/>
            <person name="Takahashi-Fujii A."/>
            <person name="Hara H."/>
            <person name="Tanase T.-O."/>
            <person name="Nomura Y."/>
            <person name="Togiya S."/>
            <person name="Komai F."/>
            <person name="Hara R."/>
            <person name="Takeuchi K."/>
            <person name="Arita M."/>
            <person name="Imose N."/>
            <person name="Musashino K."/>
            <person name="Yuuki H."/>
            <person name="Oshima A."/>
            <person name="Sasaki N."/>
            <person name="Aotsuka S."/>
            <person name="Yoshikawa Y."/>
            <person name="Matsunawa H."/>
            <person name="Ichihara T."/>
            <person name="Shiohata N."/>
            <person name="Sano S."/>
            <person name="Moriya S."/>
            <person name="Momiyama H."/>
            <person name="Satoh N."/>
            <person name="Takami S."/>
            <person name="Terashima Y."/>
            <person name="Suzuki O."/>
            <person name="Nakagawa S."/>
            <person name="Senoh A."/>
            <person name="Mizoguchi H."/>
            <person name="Goto Y."/>
            <person name="Shimizu F."/>
            <person name="Wakebe H."/>
            <person name="Hishigaki H."/>
            <person name="Watanabe T."/>
            <person name="Sugiyama A."/>
            <person name="Takemoto M."/>
            <person name="Kawakami B."/>
            <person name="Yamazaki M."/>
            <person name="Watanabe K."/>
            <person name="Kumagai A."/>
            <person name="Itakura S."/>
            <person name="Fukuzumi Y."/>
            <person name="Fujimori Y."/>
            <person name="Komiyama M."/>
            <person name="Tashiro H."/>
            <person name="Tanigami A."/>
            <person name="Fujiwara T."/>
            <person name="Ono T."/>
            <person name="Yamada K."/>
            <person name="Fujii Y."/>
            <person name="Ozaki K."/>
            <person name="Hirao M."/>
            <person name="Ohmori Y."/>
            <person name="Kawabata A."/>
            <person name="Hikiji T."/>
            <person name="Kobatake N."/>
            <person name="Inagaki H."/>
            <person name="Ikema Y."/>
            <person name="Okamoto S."/>
            <person name="Okitani R."/>
            <person name="Kawakami T."/>
            <person name="Noguchi S."/>
            <person name="Itoh T."/>
            <person name="Shigeta K."/>
            <person name="Senba T."/>
            <person name="Matsumura K."/>
            <person name="Nakajima Y."/>
            <person name="Mizuno T."/>
            <person name="Morinaga M."/>
            <person name="Sasaki M."/>
            <person name="Togashi T."/>
            <person name="Oyama M."/>
            <person name="Hata H."/>
            <person name="Watanabe M."/>
            <person name="Komatsu T."/>
            <person name="Mizushima-Sugano J."/>
            <person name="Satoh T."/>
            <person name="Shirai Y."/>
            <person name="Takahashi Y."/>
            <person name="Nakagawa K."/>
            <person name="Okumura K."/>
            <person name="Nagase T."/>
            <person name="Nomura N."/>
            <person name="Kikuchi H."/>
            <person name="Masuho Y."/>
            <person name="Yamashita R."/>
            <person name="Nakai K."/>
            <person name="Yada T."/>
            <person name="Nakamura Y."/>
            <person name="Ohara O."/>
            <person name="Isogai T."/>
            <person name="Sugano S."/>
        </authorList>
    </citation>
    <scope>NUCLEOTIDE SEQUENCE [LARGE SCALE MRNA] (ISOFORM 1)</scope>
    <source>
        <tissue>Teratocarcinoma</tissue>
    </source>
</reference>
<reference key="2">
    <citation type="journal article" date="2007" name="BMC Genomics">
        <title>The full-ORF clone resource of the German cDNA consortium.</title>
        <authorList>
            <person name="Bechtel S."/>
            <person name="Rosenfelder H."/>
            <person name="Duda A."/>
            <person name="Schmidt C.P."/>
            <person name="Ernst U."/>
            <person name="Wellenreuther R."/>
            <person name="Mehrle A."/>
            <person name="Schuster C."/>
            <person name="Bahr A."/>
            <person name="Bloecker H."/>
            <person name="Heubner D."/>
            <person name="Hoerlein A."/>
            <person name="Michel G."/>
            <person name="Wedler H."/>
            <person name="Koehrer K."/>
            <person name="Ottenwaelder B."/>
            <person name="Poustka A."/>
            <person name="Wiemann S."/>
            <person name="Schupp I."/>
        </authorList>
    </citation>
    <scope>NUCLEOTIDE SEQUENCE [LARGE SCALE MRNA] (ISOFORM 2)</scope>
    <source>
        <tissue>Kidney</tissue>
    </source>
</reference>
<reference key="3">
    <citation type="journal article" date="2004" name="Genome Res.">
        <title>The status, quality, and expansion of the NIH full-length cDNA project: the Mammalian Gene Collection (MGC).</title>
        <authorList>
            <consortium name="The MGC Project Team"/>
        </authorList>
    </citation>
    <scope>NUCLEOTIDE SEQUENCE [LARGE SCALE MRNA] (ISOFORM 1)</scope>
    <source>
        <tissue>Brain</tissue>
        <tissue>Lung</tissue>
        <tissue>Lymph</tissue>
        <tissue>Muscle</tissue>
    </source>
</reference>
<reference key="4">
    <citation type="journal article" date="2011" name="BMC Syst. Biol.">
        <title>Initial characterization of the human central proteome.</title>
        <authorList>
            <person name="Burkard T.R."/>
            <person name="Planyavsky M."/>
            <person name="Kaupe I."/>
            <person name="Breitwieser F.P."/>
            <person name="Buerckstuemmer T."/>
            <person name="Bennett K.L."/>
            <person name="Superti-Furga G."/>
            <person name="Colinge J."/>
        </authorList>
    </citation>
    <scope>IDENTIFICATION BY MASS SPECTROMETRY [LARGE SCALE ANALYSIS]</scope>
</reference>
<reference key="5">
    <citation type="journal article" date="2013" name="J. Proteome Res.">
        <title>Toward a comprehensive characterization of a human cancer cell phosphoproteome.</title>
        <authorList>
            <person name="Zhou H."/>
            <person name="Di Palma S."/>
            <person name="Preisinger C."/>
            <person name="Peng M."/>
            <person name="Polat A.N."/>
            <person name="Heck A.J."/>
            <person name="Mohammed S."/>
        </authorList>
    </citation>
    <scope>PHOSPHORYLATION [LARGE SCALE ANALYSIS] AT THR-211</scope>
    <scope>IDENTIFICATION BY MASS SPECTROMETRY [LARGE SCALE ANALYSIS]</scope>
    <source>
        <tissue>Erythroleukemia</tissue>
    </source>
</reference>
<reference key="6">
    <citation type="journal article" date="2014" name="J. Med. Genet.">
        <title>NECAP1 loss of function leads to a severe infantile epileptic encephalopathy.</title>
        <authorList>
            <person name="Alazami A.M."/>
            <person name="Hijazi H."/>
            <person name="Kentab A.Y."/>
            <person name="Alkuraya F.S."/>
        </authorList>
    </citation>
    <scope>INVOLVEMENT IN DEE21</scope>
</reference>
<reference key="7">
    <citation type="journal article" date="2014" name="Mol. Cell. Proteomics">
        <title>Immunoaffinity enrichment and mass spectrometry analysis of protein methylation.</title>
        <authorList>
            <person name="Guo A."/>
            <person name="Gu H."/>
            <person name="Zhou J."/>
            <person name="Mulhern D."/>
            <person name="Wang Y."/>
            <person name="Lee K.A."/>
            <person name="Yang V."/>
            <person name="Aguiar M."/>
            <person name="Kornhauser J."/>
            <person name="Jia X."/>
            <person name="Ren J."/>
            <person name="Beausoleil S.A."/>
            <person name="Silva J.C."/>
            <person name="Vemulapalli V."/>
            <person name="Bedford M.T."/>
            <person name="Comb M.J."/>
        </authorList>
    </citation>
    <scope>METHYLATION [LARGE SCALE ANALYSIS] AT ARG-180</scope>
    <scope>IDENTIFICATION BY MASS SPECTROMETRY [LARGE SCALE ANALYSIS]</scope>
    <source>
        <tissue>Colon carcinoma</tissue>
    </source>
</reference>